<reference key="1">
    <citation type="journal article" date="2009" name="PLoS Genet.">
        <title>Organised genome dynamics in the Escherichia coli species results in highly diverse adaptive paths.</title>
        <authorList>
            <person name="Touchon M."/>
            <person name="Hoede C."/>
            <person name="Tenaillon O."/>
            <person name="Barbe V."/>
            <person name="Baeriswyl S."/>
            <person name="Bidet P."/>
            <person name="Bingen E."/>
            <person name="Bonacorsi S."/>
            <person name="Bouchier C."/>
            <person name="Bouvet O."/>
            <person name="Calteau A."/>
            <person name="Chiapello H."/>
            <person name="Clermont O."/>
            <person name="Cruveiller S."/>
            <person name="Danchin A."/>
            <person name="Diard M."/>
            <person name="Dossat C."/>
            <person name="Karoui M.E."/>
            <person name="Frapy E."/>
            <person name="Garry L."/>
            <person name="Ghigo J.M."/>
            <person name="Gilles A.M."/>
            <person name="Johnson J."/>
            <person name="Le Bouguenec C."/>
            <person name="Lescat M."/>
            <person name="Mangenot S."/>
            <person name="Martinez-Jehanne V."/>
            <person name="Matic I."/>
            <person name="Nassif X."/>
            <person name="Oztas S."/>
            <person name="Petit M.A."/>
            <person name="Pichon C."/>
            <person name="Rouy Z."/>
            <person name="Ruf C.S."/>
            <person name="Schneider D."/>
            <person name="Tourret J."/>
            <person name="Vacherie B."/>
            <person name="Vallenet D."/>
            <person name="Medigue C."/>
            <person name="Rocha E.P.C."/>
            <person name="Denamur E."/>
        </authorList>
    </citation>
    <scope>NUCLEOTIDE SEQUENCE [LARGE SCALE GENOMIC DNA]</scope>
    <source>
        <strain>IAI1</strain>
    </source>
</reference>
<feature type="chain" id="PRO_1000188384" description="Nucleoid occlusion factor SlmA">
    <location>
        <begin position="1"/>
        <end position="198"/>
    </location>
</feature>
<feature type="domain" description="HTH tetR-type" evidence="1">
    <location>
        <begin position="10"/>
        <end position="70"/>
    </location>
</feature>
<feature type="DNA-binding region" description="H-T-H motif" evidence="1">
    <location>
        <begin position="33"/>
        <end position="52"/>
    </location>
</feature>
<feature type="coiled-coil region" evidence="1">
    <location>
        <begin position="117"/>
        <end position="144"/>
    </location>
</feature>
<organism>
    <name type="scientific">Escherichia coli O8 (strain IAI1)</name>
    <dbReference type="NCBI Taxonomy" id="585034"/>
    <lineage>
        <taxon>Bacteria</taxon>
        <taxon>Pseudomonadati</taxon>
        <taxon>Pseudomonadota</taxon>
        <taxon>Gammaproteobacteria</taxon>
        <taxon>Enterobacterales</taxon>
        <taxon>Enterobacteriaceae</taxon>
        <taxon>Escherichia</taxon>
    </lineage>
</organism>
<proteinExistence type="inferred from homology"/>
<protein>
    <recommendedName>
        <fullName evidence="1">Nucleoid occlusion factor SlmA</fullName>
    </recommendedName>
</protein>
<sequence>MAEKQTAKRNRREEILQSLALMLESSDGSQRITTAKLAASVGVSEAALYRHFPSKTRMFDSLIEFIEDSLITRINLILKDEKDTTARLRLIVLLLLGFGERNPGLTRILTGHALMFEQDRLQGRINQLFERIEAQLRQVLREKRMREGEGYTTDETLLASQILAFCEGMLSRFVRSEFKYRPTDDFDARWPLIAAQLQ</sequence>
<dbReference type="EMBL" id="CU928160">
    <property type="protein sequence ID" value="CAR00609.1"/>
    <property type="molecule type" value="Genomic_DNA"/>
</dbReference>
<dbReference type="RefSeq" id="WP_000818601.1">
    <property type="nucleotide sequence ID" value="NC_011741.1"/>
</dbReference>
<dbReference type="SMR" id="B7M4C6"/>
<dbReference type="GeneID" id="93778356"/>
<dbReference type="KEGG" id="ecr:ECIAI1_3812"/>
<dbReference type="HOGENOM" id="CLU_069356_5_0_6"/>
<dbReference type="GO" id="GO:0043590">
    <property type="term" value="C:bacterial nucleoid"/>
    <property type="evidence" value="ECO:0007669"/>
    <property type="project" value="UniProtKB-UniRule"/>
</dbReference>
<dbReference type="GO" id="GO:0005737">
    <property type="term" value="C:cytoplasm"/>
    <property type="evidence" value="ECO:0007669"/>
    <property type="project" value="UniProtKB-UniRule"/>
</dbReference>
<dbReference type="GO" id="GO:0003700">
    <property type="term" value="F:DNA-binding transcription factor activity"/>
    <property type="evidence" value="ECO:0007669"/>
    <property type="project" value="TreeGrafter"/>
</dbReference>
<dbReference type="GO" id="GO:0000976">
    <property type="term" value="F:transcription cis-regulatory region binding"/>
    <property type="evidence" value="ECO:0007669"/>
    <property type="project" value="TreeGrafter"/>
</dbReference>
<dbReference type="GO" id="GO:0051301">
    <property type="term" value="P:cell division"/>
    <property type="evidence" value="ECO:0007669"/>
    <property type="project" value="UniProtKB-KW"/>
</dbReference>
<dbReference type="GO" id="GO:0010974">
    <property type="term" value="P:negative regulation of division septum assembly"/>
    <property type="evidence" value="ECO:0007669"/>
    <property type="project" value="InterPro"/>
</dbReference>
<dbReference type="FunFam" id="1.10.357.10:FF:000002">
    <property type="entry name" value="Nucleoid occlusion factor SlmA"/>
    <property type="match status" value="1"/>
</dbReference>
<dbReference type="Gene3D" id="1.10.357.10">
    <property type="entry name" value="Tetracycline Repressor, domain 2"/>
    <property type="match status" value="1"/>
</dbReference>
<dbReference type="HAMAP" id="MF_01839">
    <property type="entry name" value="NO_factor_SlmA"/>
    <property type="match status" value="1"/>
</dbReference>
<dbReference type="InterPro" id="IPR023772">
    <property type="entry name" value="DNA-bd_HTH_TetR-type_CS"/>
</dbReference>
<dbReference type="InterPro" id="IPR009057">
    <property type="entry name" value="Homeodomain-like_sf"/>
</dbReference>
<dbReference type="InterPro" id="IPR050109">
    <property type="entry name" value="HTH-type_TetR-like_transc_reg"/>
</dbReference>
<dbReference type="InterPro" id="IPR001647">
    <property type="entry name" value="HTH_TetR"/>
</dbReference>
<dbReference type="InterPro" id="IPR023769">
    <property type="entry name" value="NO_SlmA"/>
</dbReference>
<dbReference type="InterPro" id="IPR054580">
    <property type="entry name" value="SlmA-like_C"/>
</dbReference>
<dbReference type="InterPro" id="IPR036271">
    <property type="entry name" value="Tet_transcr_reg_TetR-rel_C_sf"/>
</dbReference>
<dbReference type="NCBIfam" id="NF007015">
    <property type="entry name" value="PRK09480.1"/>
    <property type="match status" value="1"/>
</dbReference>
<dbReference type="PANTHER" id="PTHR30055">
    <property type="entry name" value="HTH-TYPE TRANSCRIPTIONAL REGULATOR RUTR"/>
    <property type="match status" value="1"/>
</dbReference>
<dbReference type="PANTHER" id="PTHR30055:SF183">
    <property type="entry name" value="NUCLEOID OCCLUSION FACTOR SLMA"/>
    <property type="match status" value="1"/>
</dbReference>
<dbReference type="Pfam" id="PF22276">
    <property type="entry name" value="SlmA-like_C"/>
    <property type="match status" value="1"/>
</dbReference>
<dbReference type="Pfam" id="PF00440">
    <property type="entry name" value="TetR_N"/>
    <property type="match status" value="1"/>
</dbReference>
<dbReference type="SUPFAM" id="SSF46689">
    <property type="entry name" value="Homeodomain-like"/>
    <property type="match status" value="1"/>
</dbReference>
<dbReference type="SUPFAM" id="SSF48498">
    <property type="entry name" value="Tetracyclin repressor-like, C-terminal domain"/>
    <property type="match status" value="1"/>
</dbReference>
<dbReference type="PROSITE" id="PS01081">
    <property type="entry name" value="HTH_TETR_1"/>
    <property type="match status" value="1"/>
</dbReference>
<dbReference type="PROSITE" id="PS50977">
    <property type="entry name" value="HTH_TETR_2"/>
    <property type="match status" value="1"/>
</dbReference>
<name>SLMA_ECO8A</name>
<evidence type="ECO:0000255" key="1">
    <source>
        <dbReference type="HAMAP-Rule" id="MF_01839"/>
    </source>
</evidence>
<gene>
    <name evidence="1" type="primary">slmA</name>
    <name type="ordered locus">ECIAI1_3812</name>
</gene>
<comment type="function">
    <text evidence="1">Required for nucleoid occlusion (NO) phenomenon, which prevents Z-ring formation and cell division over the nucleoid. Acts as a DNA-associated cell division inhibitor that binds simultaneously chromosomal DNA and FtsZ, and disrupts the assembly of FtsZ polymers. SlmA-DNA-binding sequences (SBS) are dispersed on non-Ter regions of the chromosome, preventing FtsZ polymerization at these regions.</text>
</comment>
<comment type="subunit">
    <text evidence="1">Homodimer. Interacts with FtsZ.</text>
</comment>
<comment type="subcellular location">
    <subcellularLocation>
        <location evidence="1">Cytoplasm</location>
        <location evidence="1">Nucleoid</location>
    </subcellularLocation>
</comment>
<comment type="similarity">
    <text evidence="1">Belongs to the nucleoid occlusion factor SlmA family.</text>
</comment>
<accession>B7M4C6</accession>
<keyword id="KW-0131">Cell cycle</keyword>
<keyword id="KW-0132">Cell division</keyword>
<keyword id="KW-0175">Coiled coil</keyword>
<keyword id="KW-0963">Cytoplasm</keyword>
<keyword id="KW-0238">DNA-binding</keyword>